<sequence length="548" mass="61154">MQDRLRILEDLNMLYIRQMALSLEDTELQRKLDHEIRMREGACKLLAACSQREQALEATKSLLVCNSRILSYMGELQRRKEAQVLGKTGRRPSDSVQPPERSPCRGRVCISDLRIPLMWKDTEYFKNKGDLHRWAVFLLLQLGEQIQDTEMVLVDRTLTDISFQNNAIFAEAGPDFELRLELYGACVEEEGALAGAPKRLATKLSSSLGRSSGKRVRASLDSAGGSGNSPILLPTPAVGGPRYHLLAHTTLTLAAVQDGFRTHDLTLTSHEENPAWLPLYGSMCCRLVAQPLCMTQPTASGTLRVQQAGELQSGTLVHGVLKGTNLFCYWRSEDADSGQEPLFTILINKETRVRAGELEQAPEWPFTLSISNRYGDDEVTNTLQVQSRDALQSWMEALWQLFLDMSQWKHCCDEVMKIETPAPRKPPQALAKQGSLYHEMAIEPLEDIAAVTDILAQREGTRLEPPPPWLAMFTDQPALRSSCSPASVPTWTQPLPWGRPRTFSLDAVPADHSLGPSRSVAPLPPQRSPQSRGFYSKSQLSTWLQSPV</sequence>
<name>RTKN_RAT</name>
<keyword id="KW-0025">Alternative splicing</keyword>
<keyword id="KW-0053">Apoptosis</keyword>
<keyword id="KW-0175">Coiled coil</keyword>
<keyword id="KW-0342">GTP-binding</keyword>
<keyword id="KW-0488">Methylation</keyword>
<keyword id="KW-0547">Nucleotide-binding</keyword>
<keyword id="KW-0597">Phosphoprotein</keyword>
<keyword id="KW-1185">Reference proteome</keyword>
<protein>
    <recommendedName>
        <fullName>Rhotekin</fullName>
    </recommendedName>
</protein>
<dbReference type="EMBL" id="AY348867">
    <property type="protein sequence ID" value="AAQ55227.1"/>
    <property type="molecule type" value="mRNA"/>
</dbReference>
<dbReference type="EMBL" id="AY348868">
    <property type="protein sequence ID" value="AAQ55228.1"/>
    <property type="molecule type" value="mRNA"/>
</dbReference>
<dbReference type="RefSeq" id="NP_001402780.1">
    <molecule id="Q6V7V2-1"/>
    <property type="nucleotide sequence ID" value="NM_001415851.2"/>
</dbReference>
<dbReference type="RefSeq" id="NP_908935.1">
    <molecule id="Q6V7V2-1"/>
    <property type="nucleotide sequence ID" value="NM_184046.3"/>
</dbReference>
<dbReference type="RefSeq" id="XP_008761258.1">
    <property type="nucleotide sequence ID" value="XM_008763036.2"/>
</dbReference>
<dbReference type="RefSeq" id="XP_008761277.1">
    <property type="nucleotide sequence ID" value="XM_008763055.2"/>
</dbReference>
<dbReference type="RefSeq" id="XP_017448493.1">
    <property type="nucleotide sequence ID" value="XM_017593004.1"/>
</dbReference>
<dbReference type="RefSeq" id="XP_017458304.1">
    <property type="nucleotide sequence ID" value="XM_017602815.1"/>
</dbReference>
<dbReference type="RefSeq" id="XP_017458305.1">
    <property type="nucleotide sequence ID" value="XM_017602816.1"/>
</dbReference>
<dbReference type="SMR" id="Q6V7V2"/>
<dbReference type="BioGRID" id="255562">
    <property type="interactions" value="1"/>
</dbReference>
<dbReference type="FunCoup" id="Q6V7V2">
    <property type="interactions" value="253"/>
</dbReference>
<dbReference type="IntAct" id="Q6V7V2">
    <property type="interactions" value="1"/>
</dbReference>
<dbReference type="MINT" id="Q6V7V2"/>
<dbReference type="STRING" id="10116.ENSRNOP00000032233"/>
<dbReference type="iPTMnet" id="Q6V7V2"/>
<dbReference type="PhosphoSitePlus" id="Q6V7V2"/>
<dbReference type="PaxDb" id="10116-ENSRNOP00000032233"/>
<dbReference type="Ensembl" id="ENSRNOT00000031964.5">
    <molecule id="Q6V7V2-1"/>
    <property type="protein sequence ID" value="ENSRNOP00000032233.3"/>
    <property type="gene ID" value="ENSRNOG00000009022.9"/>
</dbReference>
<dbReference type="GeneID" id="297383"/>
<dbReference type="KEGG" id="rno:297383"/>
<dbReference type="UCSC" id="RGD:727874">
    <molecule id="Q6V7V2-1"/>
    <property type="organism name" value="rat"/>
</dbReference>
<dbReference type="AGR" id="RGD:727874"/>
<dbReference type="CTD" id="6242"/>
<dbReference type="RGD" id="727874">
    <property type="gene designation" value="Rtkn"/>
</dbReference>
<dbReference type="eggNOG" id="ENOG502QRWR">
    <property type="taxonomic scope" value="Eukaryota"/>
</dbReference>
<dbReference type="GeneTree" id="ENSGT00940000158491"/>
<dbReference type="HOGENOM" id="CLU_025066_2_0_1"/>
<dbReference type="InParanoid" id="Q6V7V2"/>
<dbReference type="PhylomeDB" id="Q6V7V2"/>
<dbReference type="Reactome" id="R-RNO-5666185">
    <property type="pathway name" value="RHO GTPases Activate Rhotekin and Rhophilins"/>
</dbReference>
<dbReference type="Reactome" id="R-RNO-8980692">
    <property type="pathway name" value="RHOA GTPase cycle"/>
</dbReference>
<dbReference type="Reactome" id="R-RNO-9013026">
    <property type="pathway name" value="RHOB GTPase cycle"/>
</dbReference>
<dbReference type="PRO" id="PR:Q6V7V2"/>
<dbReference type="Proteomes" id="UP000002494">
    <property type="component" value="Chromosome 4"/>
</dbReference>
<dbReference type="Bgee" id="ENSRNOG00000009022">
    <property type="expression patterns" value="Expressed in cerebellum and 16 other cell types or tissues"/>
</dbReference>
<dbReference type="ExpressionAtlas" id="Q6V7V2">
    <property type="expression patterns" value="baseline"/>
</dbReference>
<dbReference type="GO" id="GO:0005826">
    <property type="term" value="C:actomyosin contractile ring"/>
    <property type="evidence" value="ECO:0000318"/>
    <property type="project" value="GO_Central"/>
</dbReference>
<dbReference type="GO" id="GO:0005525">
    <property type="term" value="F:GTP binding"/>
    <property type="evidence" value="ECO:0007669"/>
    <property type="project" value="UniProtKB-KW"/>
</dbReference>
<dbReference type="GO" id="GO:0005095">
    <property type="term" value="F:GTPase inhibitor activity"/>
    <property type="evidence" value="ECO:0000250"/>
    <property type="project" value="UniProtKB"/>
</dbReference>
<dbReference type="GO" id="GO:0031267">
    <property type="term" value="F:small GTPase binding"/>
    <property type="evidence" value="ECO:0000250"/>
    <property type="project" value="UniProtKB"/>
</dbReference>
<dbReference type="GO" id="GO:0000915">
    <property type="term" value="P:actomyosin contractile ring assembly"/>
    <property type="evidence" value="ECO:0000318"/>
    <property type="project" value="GO_Central"/>
</dbReference>
<dbReference type="GO" id="GO:0006915">
    <property type="term" value="P:apoptotic process"/>
    <property type="evidence" value="ECO:0007669"/>
    <property type="project" value="UniProtKB-KW"/>
</dbReference>
<dbReference type="GO" id="GO:0000281">
    <property type="term" value="P:mitotic cytokinesis"/>
    <property type="evidence" value="ECO:0000318"/>
    <property type="project" value="GO_Central"/>
</dbReference>
<dbReference type="GO" id="GO:0042981">
    <property type="term" value="P:regulation of apoptotic process"/>
    <property type="evidence" value="ECO:0000250"/>
    <property type="project" value="UniProtKB"/>
</dbReference>
<dbReference type="GO" id="GO:0007266">
    <property type="term" value="P:Rho protein signal transduction"/>
    <property type="evidence" value="ECO:0000250"/>
    <property type="project" value="UniProtKB"/>
</dbReference>
<dbReference type="GO" id="GO:0031106">
    <property type="term" value="P:septin ring organization"/>
    <property type="evidence" value="ECO:0000318"/>
    <property type="project" value="GO_Central"/>
</dbReference>
<dbReference type="GO" id="GO:0007165">
    <property type="term" value="P:signal transduction"/>
    <property type="evidence" value="ECO:0000266"/>
    <property type="project" value="RGD"/>
</dbReference>
<dbReference type="InterPro" id="IPR012966">
    <property type="entry name" value="AHD"/>
</dbReference>
<dbReference type="InterPro" id="IPR051364">
    <property type="entry name" value="Cytokinesis/Rho-signaling"/>
</dbReference>
<dbReference type="InterPro" id="IPR011072">
    <property type="entry name" value="HR1_rho-bd"/>
</dbReference>
<dbReference type="InterPro" id="IPR001849">
    <property type="entry name" value="PH_domain"/>
</dbReference>
<dbReference type="PANTHER" id="PTHR21538">
    <property type="entry name" value="ANILLIN/RHOTEKIN RTKN"/>
    <property type="match status" value="1"/>
</dbReference>
<dbReference type="PANTHER" id="PTHR21538:SF19">
    <property type="entry name" value="RHOTEKIN"/>
    <property type="match status" value="1"/>
</dbReference>
<dbReference type="Pfam" id="PF08174">
    <property type="entry name" value="Anillin"/>
    <property type="match status" value="1"/>
</dbReference>
<dbReference type="SMART" id="SM00742">
    <property type="entry name" value="Hr1"/>
    <property type="match status" value="1"/>
</dbReference>
<dbReference type="SMART" id="SM00233">
    <property type="entry name" value="PH"/>
    <property type="match status" value="1"/>
</dbReference>
<dbReference type="SUPFAM" id="SSF50729">
    <property type="entry name" value="PH domain-like"/>
    <property type="match status" value="1"/>
</dbReference>
<dbReference type="PROSITE" id="PS51860">
    <property type="entry name" value="REM_1"/>
    <property type="match status" value="1"/>
</dbReference>
<feature type="chain" id="PRO_0000233942" description="Rhotekin">
    <location>
        <begin position="1"/>
        <end position="548"/>
    </location>
</feature>
<feature type="domain" description="REM-1" evidence="5">
    <location>
        <begin position="10"/>
        <end position="85"/>
    </location>
</feature>
<feature type="domain" description="PH" evidence="4">
    <location>
        <begin position="296"/>
        <end position="403"/>
    </location>
</feature>
<feature type="region of interest" description="Disordered" evidence="6">
    <location>
        <begin position="83"/>
        <end position="103"/>
    </location>
</feature>
<feature type="region of interest" description="Disordered" evidence="6">
    <location>
        <begin position="506"/>
        <end position="548"/>
    </location>
</feature>
<feature type="compositionally biased region" description="Polar residues" evidence="6">
    <location>
        <begin position="528"/>
        <end position="548"/>
    </location>
</feature>
<feature type="modified residue" description="Phosphoserine" evidence="3">
    <location>
        <position position="22"/>
    </location>
</feature>
<feature type="modified residue" description="Phosphoserine" evidence="3">
    <location>
        <position position="93"/>
    </location>
</feature>
<feature type="modified residue" description="Asymmetric dimethylarginine" evidence="2">
    <location>
        <position position="217"/>
    </location>
</feature>
<feature type="modified residue" description="Phosphoserine" evidence="3">
    <location>
        <position position="219"/>
    </location>
</feature>
<feature type="modified residue" description="Phosphoserine" evidence="12">
    <location>
        <position position="504"/>
    </location>
</feature>
<feature type="modified residue" description="Phosphoserine" evidence="3">
    <location>
        <position position="513"/>
    </location>
</feature>
<feature type="modified residue" description="Phosphoserine" evidence="3">
    <location>
        <position position="528"/>
    </location>
</feature>
<feature type="splice variant" id="VSP_052007" description="In isoform 2." evidence="8">
    <location>
        <begin position="139"/>
        <end position="372"/>
    </location>
</feature>
<comment type="function">
    <text evidence="1">Mediates Rho signaling to activate NF-kappa-B and may confer increased resistance to apoptosis to cells in gastric tumorigenesis. May play a novel role in the organization of septin structures (By similarity).</text>
</comment>
<comment type="subunit">
    <text evidence="3">Interacts via its C-terminal region with the TAX1BP3 PDZ domain. This interaction facilitates Rho-mediated activation of the c-Fos serum response element (SRE). Interacts with SEPT9. Specifically binds to GTP-bound RHOA, RHOB and RHOC and inhibits their GTPase activity (By similarity).</text>
</comment>
<comment type="alternative products">
    <event type="alternative splicing"/>
    <isoform>
        <id>Q6V7V2-1</id>
        <name evidence="7">1</name>
        <sequence type="displayed"/>
    </isoform>
    <isoform>
        <id>Q6V7V2-2</id>
        <name evidence="7">2</name>
        <sequence type="described" ref="VSP_052007"/>
    </isoform>
</comment>
<proteinExistence type="evidence at protein level"/>
<organism>
    <name type="scientific">Rattus norvegicus</name>
    <name type="common">Rat</name>
    <dbReference type="NCBI Taxonomy" id="10116"/>
    <lineage>
        <taxon>Eukaryota</taxon>
        <taxon>Metazoa</taxon>
        <taxon>Chordata</taxon>
        <taxon>Craniata</taxon>
        <taxon>Vertebrata</taxon>
        <taxon>Euteleostomi</taxon>
        <taxon>Mammalia</taxon>
        <taxon>Eutheria</taxon>
        <taxon>Euarchontoglires</taxon>
        <taxon>Glires</taxon>
        <taxon>Rodentia</taxon>
        <taxon>Myomorpha</taxon>
        <taxon>Muroidea</taxon>
        <taxon>Muridae</taxon>
        <taxon>Murinae</taxon>
        <taxon>Rattus</taxon>
    </lineage>
</organism>
<evidence type="ECO:0000250" key="1"/>
<evidence type="ECO:0000250" key="2">
    <source>
        <dbReference type="UniProtKB" id="Q8C6B2"/>
    </source>
</evidence>
<evidence type="ECO:0000250" key="3">
    <source>
        <dbReference type="UniProtKB" id="Q9BST9"/>
    </source>
</evidence>
<evidence type="ECO:0000255" key="4"/>
<evidence type="ECO:0000255" key="5">
    <source>
        <dbReference type="PROSITE-ProRule" id="PRU01207"/>
    </source>
</evidence>
<evidence type="ECO:0000256" key="6">
    <source>
        <dbReference type="SAM" id="MobiDB-lite"/>
    </source>
</evidence>
<evidence type="ECO:0000269" key="7">
    <source ref="1"/>
</evidence>
<evidence type="ECO:0000303" key="8">
    <source ref="1"/>
</evidence>
<evidence type="ECO:0000305" key="9"/>
<evidence type="ECO:0000312" key="10">
    <source>
        <dbReference type="EMBL" id="AAQ55227.1"/>
    </source>
</evidence>
<evidence type="ECO:0000312" key="11">
    <source>
        <dbReference type="RGD" id="727874"/>
    </source>
</evidence>
<evidence type="ECO:0007744" key="12">
    <source>
    </source>
</evidence>
<reference evidence="9 10" key="1">
    <citation type="submission" date="2003-07" db="EMBL/GenBank/DDBJ databases">
        <title>Cloning of rat rhotekin's two splicing isoform.</title>
        <authorList>
            <person name="Zhou G."/>
            <person name="Huang X."/>
            <person name="Yu L."/>
        </authorList>
    </citation>
    <scope>NUCLEOTIDE SEQUENCE [MRNA] (ISOFORMS 1 AND 2)</scope>
    <source>
        <strain evidence="10">Sprague-Dawley</strain>
    </source>
</reference>
<reference key="2">
    <citation type="journal article" date="2012" name="Nat. Commun.">
        <title>Quantitative maps of protein phosphorylation sites across 14 different rat organs and tissues.</title>
        <authorList>
            <person name="Lundby A."/>
            <person name="Secher A."/>
            <person name="Lage K."/>
            <person name="Nordsborg N.B."/>
            <person name="Dmytriyev A."/>
            <person name="Lundby C."/>
            <person name="Olsen J.V."/>
        </authorList>
    </citation>
    <scope>PHOSPHORYLATION [LARGE SCALE ANALYSIS] AT SER-504</scope>
    <scope>IDENTIFICATION BY MASS SPECTROMETRY [LARGE SCALE ANALYSIS]</scope>
</reference>
<gene>
    <name evidence="11" type="primary">Rtkn</name>
</gene>
<accession>Q6V7V2</accession>
<accession>Q6V7V1</accession>